<dbReference type="EMBL" id="DQ075229">
    <property type="protein sequence ID" value="AAZ29708.1"/>
    <property type="molecule type" value="mRNA"/>
</dbReference>
<dbReference type="SMR" id="Q1I177"/>
<dbReference type="GO" id="GO:0005576">
    <property type="term" value="C:extracellular region"/>
    <property type="evidence" value="ECO:0007669"/>
    <property type="project" value="UniProtKB-SubCell"/>
</dbReference>
<dbReference type="GO" id="GO:0019871">
    <property type="term" value="F:sodium channel inhibitor activity"/>
    <property type="evidence" value="ECO:0007669"/>
    <property type="project" value="InterPro"/>
</dbReference>
<dbReference type="GO" id="GO:0090729">
    <property type="term" value="F:toxin activity"/>
    <property type="evidence" value="ECO:0007669"/>
    <property type="project" value="UniProtKB-KW"/>
</dbReference>
<dbReference type="CDD" id="cd23106">
    <property type="entry name" value="neurotoxins_LC_scorpion"/>
    <property type="match status" value="1"/>
</dbReference>
<dbReference type="FunFam" id="3.30.30.10:FF:000002">
    <property type="entry name" value="Alpha-like toxin BmK-M1"/>
    <property type="match status" value="1"/>
</dbReference>
<dbReference type="Gene3D" id="3.30.30.10">
    <property type="entry name" value="Knottin, scorpion toxin-like"/>
    <property type="match status" value="1"/>
</dbReference>
<dbReference type="InterPro" id="IPR044062">
    <property type="entry name" value="LCN-type_CS_alpha_beta_dom"/>
</dbReference>
<dbReference type="InterPro" id="IPR036574">
    <property type="entry name" value="Scorpion_toxin-like_sf"/>
</dbReference>
<dbReference type="InterPro" id="IPR018218">
    <property type="entry name" value="Scorpion_toxinL"/>
</dbReference>
<dbReference type="InterPro" id="IPR002061">
    <property type="entry name" value="Scorpion_toxinL/defensin"/>
</dbReference>
<dbReference type="Pfam" id="PF00537">
    <property type="entry name" value="Toxin_3"/>
    <property type="match status" value="1"/>
</dbReference>
<dbReference type="PRINTS" id="PR00285">
    <property type="entry name" value="SCORPNTOXIN"/>
</dbReference>
<dbReference type="SUPFAM" id="SSF57095">
    <property type="entry name" value="Scorpion toxin-like"/>
    <property type="match status" value="1"/>
</dbReference>
<dbReference type="PROSITE" id="PS51863">
    <property type="entry name" value="LCN_CSAB"/>
    <property type="match status" value="1"/>
</dbReference>
<protein>
    <recommendedName>
        <fullName>Toxin Td3</fullName>
    </recommendedName>
    <alternativeName>
        <fullName>P*T-beta NaTx13.3</fullName>
    </alternativeName>
</protein>
<comment type="function">
    <text evidence="1">Beta toxins bind voltage-independently at site-4 of sodium channels (Nav) and shift the voltage of activation toward more negative potentials thereby affecting sodium channel activation and promoting spontaneous and repetitive firing.</text>
</comment>
<comment type="subcellular location">
    <subcellularLocation>
        <location>Secreted</location>
    </subcellularLocation>
</comment>
<comment type="tissue specificity">
    <text>Expressed by the venom gland.</text>
</comment>
<comment type="domain">
    <text evidence="4">Has the structural arrangement of an alpha-helix connected to antiparallel beta-sheets by disulfide bonds (CS-alpha/beta).</text>
</comment>
<comment type="mass spectrometry"/>
<comment type="miscellaneous">
    <text evidence="1">Negative results: does not affect the cardiac Nav1.5/SCN5A, the peripheral nerve channel Nav1.7/SCN9A, and the voltage-dependent potassium channel Kv1.5/KCNA5.</text>
</comment>
<comment type="similarity">
    <text evidence="4">Belongs to the long (4 C-C) scorpion toxin superfamily. Sodium channel inhibitor family. Beta subfamily.</text>
</comment>
<reference key="1">
    <citation type="journal article" date="2006" name="Comp. Biochem. Physiol.">
        <title>Diversity of long-chain toxins in Tityus zulianus and Tityus discrepans venoms (Scorpiones, Buthidae): molecular, immunological, and mass spectral analyses.</title>
        <authorList>
            <person name="Borges A."/>
            <person name="Garcia C.C."/>
            <person name="Lugo E."/>
            <person name="Alfonzo M.J."/>
            <person name="Jowers M.J."/>
            <person name="Op den Camp H.J.M."/>
        </authorList>
    </citation>
    <scope>NUCLEOTIDE SEQUENCE [MRNA]</scope>
    <scope>MASS SPECTROMETRY</scope>
    <source>
        <tissue>Venom</tissue>
        <tissue>Venom gland</tissue>
    </source>
</reference>
<reference key="2">
    <citation type="journal article" date="2012" name="PLoS ONE">
        <title>Identification and phylogenetic analysis of Tityus pachyurus and Tityus obscurus novel putative Na+-channel scorpion toxins.</title>
        <authorList>
            <person name="Guerrero-Vargas J.A."/>
            <person name="Mourao C.B."/>
            <person name="Quintero-Hernandez V."/>
            <person name="Possani L.D."/>
            <person name="Schwartz E.F."/>
        </authorList>
    </citation>
    <scope>NOMENCLATURE</scope>
</reference>
<feature type="signal peptide" evidence="1">
    <location>
        <begin position="1" status="less than"/>
        <end position="7"/>
    </location>
</feature>
<feature type="chain" id="PRO_0000253766" description="Toxin Td3">
    <location>
        <begin position="8"/>
        <end position="71"/>
    </location>
</feature>
<feature type="domain" description="LCN-type CS-alpha/beta" evidence="2">
    <location>
        <begin position="8"/>
        <end position="70"/>
    </location>
</feature>
<feature type="modified residue" description="Lysine amide" evidence="1">
    <location>
        <position position="71"/>
    </location>
</feature>
<feature type="disulfide bond" evidence="2">
    <location>
        <begin position="18"/>
        <end position="69"/>
    </location>
</feature>
<feature type="disulfide bond" evidence="2">
    <location>
        <begin position="22"/>
        <end position="44"/>
    </location>
</feature>
<feature type="disulfide bond" evidence="2">
    <location>
        <begin position="30"/>
        <end position="50"/>
    </location>
</feature>
<feature type="disulfide bond" evidence="2">
    <location>
        <begin position="34"/>
        <end position="52"/>
    </location>
</feature>
<feature type="non-terminal residue">
    <location>
        <position position="1"/>
    </location>
</feature>
<organism>
    <name type="scientific">Tityus discrepans</name>
    <name type="common">Venezuelan scorpion</name>
    <dbReference type="NCBI Taxonomy" id="57059"/>
    <lineage>
        <taxon>Eukaryota</taxon>
        <taxon>Metazoa</taxon>
        <taxon>Ecdysozoa</taxon>
        <taxon>Arthropoda</taxon>
        <taxon>Chelicerata</taxon>
        <taxon>Arachnida</taxon>
        <taxon>Scorpiones</taxon>
        <taxon>Buthida</taxon>
        <taxon>Buthoidea</taxon>
        <taxon>Buthidae</taxon>
        <taxon>Tityus</taxon>
    </lineage>
</organism>
<keyword id="KW-0027">Amidation</keyword>
<keyword id="KW-1015">Disulfide bond</keyword>
<keyword id="KW-0872">Ion channel impairing toxin</keyword>
<keyword id="KW-0528">Neurotoxin</keyword>
<keyword id="KW-0964">Secreted</keyword>
<keyword id="KW-0732">Signal</keyword>
<keyword id="KW-0800">Toxin</keyword>
<keyword id="KW-0738">Voltage-gated sodium channel impairing toxin</keyword>
<proteinExistence type="evidence at protein level"/>
<evidence type="ECO:0000250" key="1"/>
<evidence type="ECO:0000255" key="2">
    <source>
        <dbReference type="PROSITE-ProRule" id="PRU01210"/>
    </source>
</evidence>
<evidence type="ECO:0000269" key="3">
    <source>
    </source>
</evidence>
<evidence type="ECO:0000305" key="4"/>
<name>SCX3_TITDI</name>
<accession>Q1I177</accession>
<sequence>IGMVVECKDGYLMGPDGCKLDCLMRKGTFCAETCSLRKGKDGYCYAWLACYCYNMPDSVKVWERATNRCGKGK</sequence>